<evidence type="ECO:0000255" key="1">
    <source>
        <dbReference type="HAMAP-Rule" id="MF_00178"/>
    </source>
</evidence>
<dbReference type="EC" id="2.5.1.78" evidence="1"/>
<dbReference type="EMBL" id="AL935263">
    <property type="protein sequence ID" value="CCC78771.1"/>
    <property type="molecule type" value="Genomic_DNA"/>
</dbReference>
<dbReference type="RefSeq" id="WP_011101407.1">
    <property type="nucleotide sequence ID" value="NC_004567.2"/>
</dbReference>
<dbReference type="RefSeq" id="YP_004889285.1">
    <property type="nucleotide sequence ID" value="NC_004567.2"/>
</dbReference>
<dbReference type="SMR" id="Q88X16"/>
<dbReference type="STRING" id="220668.lp_1438"/>
<dbReference type="EnsemblBacteria" id="CCC78771">
    <property type="protein sequence ID" value="CCC78771"/>
    <property type="gene ID" value="lp_1438"/>
</dbReference>
<dbReference type="KEGG" id="lpl:lp_1438"/>
<dbReference type="PATRIC" id="fig|220668.9.peg.1204"/>
<dbReference type="eggNOG" id="COG0054">
    <property type="taxonomic scope" value="Bacteria"/>
</dbReference>
<dbReference type="HOGENOM" id="CLU_089358_1_1_9"/>
<dbReference type="OrthoDB" id="9809709at2"/>
<dbReference type="PhylomeDB" id="Q88X16"/>
<dbReference type="UniPathway" id="UPA00275">
    <property type="reaction ID" value="UER00404"/>
</dbReference>
<dbReference type="Proteomes" id="UP000000432">
    <property type="component" value="Chromosome"/>
</dbReference>
<dbReference type="GO" id="GO:0005829">
    <property type="term" value="C:cytosol"/>
    <property type="evidence" value="ECO:0007669"/>
    <property type="project" value="TreeGrafter"/>
</dbReference>
<dbReference type="GO" id="GO:0009349">
    <property type="term" value="C:riboflavin synthase complex"/>
    <property type="evidence" value="ECO:0007669"/>
    <property type="project" value="InterPro"/>
</dbReference>
<dbReference type="GO" id="GO:0000906">
    <property type="term" value="F:6,7-dimethyl-8-ribityllumazine synthase activity"/>
    <property type="evidence" value="ECO:0007669"/>
    <property type="project" value="UniProtKB-UniRule"/>
</dbReference>
<dbReference type="GO" id="GO:0009231">
    <property type="term" value="P:riboflavin biosynthetic process"/>
    <property type="evidence" value="ECO:0007669"/>
    <property type="project" value="UniProtKB-UniRule"/>
</dbReference>
<dbReference type="CDD" id="cd09209">
    <property type="entry name" value="Lumazine_synthase-I"/>
    <property type="match status" value="1"/>
</dbReference>
<dbReference type="FunFam" id="3.40.50.960:FF:000001">
    <property type="entry name" value="6,7-dimethyl-8-ribityllumazine synthase"/>
    <property type="match status" value="1"/>
</dbReference>
<dbReference type="Gene3D" id="3.40.50.960">
    <property type="entry name" value="Lumazine/riboflavin synthase"/>
    <property type="match status" value="1"/>
</dbReference>
<dbReference type="HAMAP" id="MF_00178">
    <property type="entry name" value="Lumazine_synth"/>
    <property type="match status" value="1"/>
</dbReference>
<dbReference type="InterPro" id="IPR034964">
    <property type="entry name" value="LS"/>
</dbReference>
<dbReference type="InterPro" id="IPR002180">
    <property type="entry name" value="LS/RS"/>
</dbReference>
<dbReference type="InterPro" id="IPR036467">
    <property type="entry name" value="LS/RS_sf"/>
</dbReference>
<dbReference type="NCBIfam" id="TIGR00114">
    <property type="entry name" value="lumazine-synth"/>
    <property type="match status" value="1"/>
</dbReference>
<dbReference type="PANTHER" id="PTHR21058:SF0">
    <property type="entry name" value="6,7-DIMETHYL-8-RIBITYLLUMAZINE SYNTHASE"/>
    <property type="match status" value="1"/>
</dbReference>
<dbReference type="PANTHER" id="PTHR21058">
    <property type="entry name" value="6,7-DIMETHYL-8-RIBITYLLUMAZINE SYNTHASE DMRL SYNTHASE LUMAZINE SYNTHASE"/>
    <property type="match status" value="1"/>
</dbReference>
<dbReference type="Pfam" id="PF00885">
    <property type="entry name" value="DMRL_synthase"/>
    <property type="match status" value="1"/>
</dbReference>
<dbReference type="SUPFAM" id="SSF52121">
    <property type="entry name" value="Lumazine synthase"/>
    <property type="match status" value="1"/>
</dbReference>
<name>RISB_LACPL</name>
<keyword id="KW-1185">Reference proteome</keyword>
<keyword id="KW-0686">Riboflavin biosynthesis</keyword>
<keyword id="KW-0808">Transferase</keyword>
<comment type="function">
    <text evidence="1">Catalyzes the formation of 6,7-dimethyl-8-ribityllumazine by condensation of 5-amino-6-(D-ribitylamino)uracil with 3,4-dihydroxy-2-butanone 4-phosphate. This is the penultimate step in the biosynthesis of riboflavin.</text>
</comment>
<comment type="catalytic activity">
    <reaction evidence="1">
        <text>(2S)-2-hydroxy-3-oxobutyl phosphate + 5-amino-6-(D-ribitylamino)uracil = 6,7-dimethyl-8-(1-D-ribityl)lumazine + phosphate + 2 H2O + H(+)</text>
        <dbReference type="Rhea" id="RHEA:26152"/>
        <dbReference type="ChEBI" id="CHEBI:15377"/>
        <dbReference type="ChEBI" id="CHEBI:15378"/>
        <dbReference type="ChEBI" id="CHEBI:15934"/>
        <dbReference type="ChEBI" id="CHEBI:43474"/>
        <dbReference type="ChEBI" id="CHEBI:58201"/>
        <dbReference type="ChEBI" id="CHEBI:58830"/>
        <dbReference type="EC" id="2.5.1.78"/>
    </reaction>
</comment>
<comment type="pathway">
    <text evidence="1">Cofactor biosynthesis; riboflavin biosynthesis; riboflavin from 2-hydroxy-3-oxobutyl phosphate and 5-amino-6-(D-ribitylamino)uracil: step 1/2.</text>
</comment>
<comment type="similarity">
    <text evidence="1">Belongs to the DMRL synthase family.</text>
</comment>
<reference key="1">
    <citation type="journal article" date="2003" name="Proc. Natl. Acad. Sci. U.S.A.">
        <title>Complete genome sequence of Lactobacillus plantarum WCFS1.</title>
        <authorList>
            <person name="Kleerebezem M."/>
            <person name="Boekhorst J."/>
            <person name="van Kranenburg R."/>
            <person name="Molenaar D."/>
            <person name="Kuipers O.P."/>
            <person name="Leer R."/>
            <person name="Tarchini R."/>
            <person name="Peters S.A."/>
            <person name="Sandbrink H.M."/>
            <person name="Fiers M.W.E.J."/>
            <person name="Stiekema W."/>
            <person name="Klein Lankhorst R.M."/>
            <person name="Bron P.A."/>
            <person name="Hoffer S.M."/>
            <person name="Nierop Groot M.N."/>
            <person name="Kerkhoven R."/>
            <person name="De Vries M."/>
            <person name="Ursing B."/>
            <person name="De Vos W.M."/>
            <person name="Siezen R.J."/>
        </authorList>
    </citation>
    <scope>NUCLEOTIDE SEQUENCE [LARGE SCALE GENOMIC DNA]</scope>
    <source>
        <strain>ATCC BAA-793 / NCIMB 8826 / WCFS1</strain>
    </source>
</reference>
<reference key="2">
    <citation type="journal article" date="2012" name="J. Bacteriol.">
        <title>Complete resequencing and reannotation of the Lactobacillus plantarum WCFS1 genome.</title>
        <authorList>
            <person name="Siezen R.J."/>
            <person name="Francke C."/>
            <person name="Renckens B."/>
            <person name="Boekhorst J."/>
            <person name="Wels M."/>
            <person name="Kleerebezem M."/>
            <person name="van Hijum S.A."/>
        </authorList>
    </citation>
    <scope>NUCLEOTIDE SEQUENCE [LARGE SCALE GENOMIC DNA]</scope>
    <scope>GENOME REANNOTATION</scope>
    <source>
        <strain>ATCC BAA-793 / NCIMB 8826 / WCFS1</strain>
    </source>
</reference>
<sequence>MTTFNGKINGNGLKIGIAVARFNAFVTQQLLTGAQESLVQHGVNETDIDVAWVPGAFEIPLTVQKMITTKRYDGVIALGAVIRGATAHFDYVCSGVTTGIATVSLATDTPIMFGVLTTDTIEQAMDRAGFKSGNKGADCAVSLLETLDVQRAILKADLA</sequence>
<accession>Q88X16</accession>
<accession>F9UNI2</accession>
<organism>
    <name type="scientific">Lactiplantibacillus plantarum (strain ATCC BAA-793 / NCIMB 8826 / WCFS1)</name>
    <name type="common">Lactobacillus plantarum</name>
    <dbReference type="NCBI Taxonomy" id="220668"/>
    <lineage>
        <taxon>Bacteria</taxon>
        <taxon>Bacillati</taxon>
        <taxon>Bacillota</taxon>
        <taxon>Bacilli</taxon>
        <taxon>Lactobacillales</taxon>
        <taxon>Lactobacillaceae</taxon>
        <taxon>Lactiplantibacillus</taxon>
    </lineage>
</organism>
<proteinExistence type="inferred from homology"/>
<protein>
    <recommendedName>
        <fullName evidence="1">6,7-dimethyl-8-ribityllumazine synthase</fullName>
        <shortName evidence="1">DMRL synthase</shortName>
        <shortName evidence="1">LS</shortName>
        <shortName evidence="1">Lumazine synthase</shortName>
        <ecNumber evidence="1">2.5.1.78</ecNumber>
    </recommendedName>
</protein>
<feature type="chain" id="PRO_0000134766" description="6,7-dimethyl-8-ribityllumazine synthase">
    <location>
        <begin position="1"/>
        <end position="159"/>
    </location>
</feature>
<feature type="active site" description="Proton donor" evidence="1">
    <location>
        <position position="88"/>
    </location>
</feature>
<feature type="binding site" evidence="1">
    <location>
        <position position="22"/>
    </location>
    <ligand>
        <name>5-amino-6-(D-ribitylamino)uracil</name>
        <dbReference type="ChEBI" id="CHEBI:15934"/>
    </ligand>
</feature>
<feature type="binding site" evidence="1">
    <location>
        <begin position="56"/>
        <end position="58"/>
    </location>
    <ligand>
        <name>5-amino-6-(D-ribitylamino)uracil</name>
        <dbReference type="ChEBI" id="CHEBI:15934"/>
    </ligand>
</feature>
<feature type="binding site" evidence="1">
    <location>
        <begin position="80"/>
        <end position="82"/>
    </location>
    <ligand>
        <name>5-amino-6-(D-ribitylamino)uracil</name>
        <dbReference type="ChEBI" id="CHEBI:15934"/>
    </ligand>
</feature>
<feature type="binding site" evidence="1">
    <location>
        <begin position="85"/>
        <end position="86"/>
    </location>
    <ligand>
        <name>(2S)-2-hydroxy-3-oxobutyl phosphate</name>
        <dbReference type="ChEBI" id="CHEBI:58830"/>
    </ligand>
</feature>
<feature type="binding site" evidence="1">
    <location>
        <position position="113"/>
    </location>
    <ligand>
        <name>5-amino-6-(D-ribitylamino)uracil</name>
        <dbReference type="ChEBI" id="CHEBI:15934"/>
    </ligand>
</feature>
<feature type="binding site" evidence="1">
    <location>
        <position position="127"/>
    </location>
    <ligand>
        <name>(2S)-2-hydroxy-3-oxobutyl phosphate</name>
        <dbReference type="ChEBI" id="CHEBI:58830"/>
    </ligand>
</feature>
<gene>
    <name evidence="1" type="primary">ribH</name>
    <name type="ordered locus">lp_1438</name>
</gene>